<keyword id="KW-0963">Cytoplasm</keyword>
<keyword id="KW-0311">Gluconate utilization</keyword>
<keyword id="KW-0521">NADP</keyword>
<keyword id="KW-0560">Oxidoreductase</keyword>
<keyword id="KW-0570">Pentose shunt</keyword>
<keyword id="KW-1185">Reference proteome</keyword>
<sequence>MGSMMAFAFSEIGLDVSIWDVKYDNVQQLLESAKNTNYKGKIEGFKDVSKFTQSLEGKAERKIFLFSITHGDPADSVLDMIKKDLKKGDIILDGGNENYRRTEARQKICEKIGVSWIGLGVSGGYQSARRGPSLSPGGDKEALDLVMPLLELYAGKDAKSGQPCVTRIGPKGSGHFVKMVHNGIEGGMLSTLAEAWSLLHYGRGMGYEEIADLFESWNKEGVLRNNYLLEIGAELLRVKKTPQGDGNGEGVGDGGFVLDDVLDKVVQDDDNTEGTPYWSVMESASRHISAPTLATAHFMRIASGNRIERLEVAKQLRIPSPSPIRGMKDIEAFKEHLHSAVYSSFLASFCQGLELIARASEDEGWDIDLGKCLQIWRSGCIIRSEGIADILQPAVSGNKGIKNMKYIDTVAQELHRTYPSLKEIVMAATDSDHYIPAISATLEYLKYEGGTNLPTKFMEAQMDFFGAHGYNLPGVPGEDPGPVSKGPHHYEWRPAK</sequence>
<reference key="1">
    <citation type="journal article" date="2005" name="Nature">
        <title>Sequencing of Aspergillus nidulans and comparative analysis with A. fumigatus and A. oryzae.</title>
        <authorList>
            <person name="Galagan J.E."/>
            <person name="Calvo S.E."/>
            <person name="Cuomo C."/>
            <person name="Ma L.-J."/>
            <person name="Wortman J.R."/>
            <person name="Batzoglou S."/>
            <person name="Lee S.-I."/>
            <person name="Bastuerkmen M."/>
            <person name="Spevak C.C."/>
            <person name="Clutterbuck J."/>
            <person name="Kapitonov V."/>
            <person name="Jurka J."/>
            <person name="Scazzocchio C."/>
            <person name="Farman M.L."/>
            <person name="Butler J."/>
            <person name="Purcell S."/>
            <person name="Harris S."/>
            <person name="Braus G.H."/>
            <person name="Draht O."/>
            <person name="Busch S."/>
            <person name="D'Enfert C."/>
            <person name="Bouchier C."/>
            <person name="Goldman G.H."/>
            <person name="Bell-Pedersen D."/>
            <person name="Griffiths-Jones S."/>
            <person name="Doonan J.H."/>
            <person name="Yu J."/>
            <person name="Vienken K."/>
            <person name="Pain A."/>
            <person name="Freitag M."/>
            <person name="Selker E.U."/>
            <person name="Archer D.B."/>
            <person name="Penalva M.A."/>
            <person name="Oakley B.R."/>
            <person name="Momany M."/>
            <person name="Tanaka T."/>
            <person name="Kumagai T."/>
            <person name="Asai K."/>
            <person name="Machida M."/>
            <person name="Nierman W.C."/>
            <person name="Denning D.W."/>
            <person name="Caddick M.X."/>
            <person name="Hynes M."/>
            <person name="Paoletti M."/>
            <person name="Fischer R."/>
            <person name="Miller B.L."/>
            <person name="Dyer P.S."/>
            <person name="Sachs M.S."/>
            <person name="Osmani S.A."/>
            <person name="Birren B.W."/>
        </authorList>
    </citation>
    <scope>NUCLEOTIDE SEQUENCE [LARGE SCALE GENOMIC DNA]</scope>
    <source>
        <strain>FGSC A4 / ATCC 38163 / CBS 112.46 / NRRL 194 / M139</strain>
    </source>
</reference>
<reference key="2">
    <citation type="journal article" date="2009" name="Fungal Genet. Biol.">
        <title>The 2008 update of the Aspergillus nidulans genome annotation: a community effort.</title>
        <authorList>
            <person name="Wortman J.R."/>
            <person name="Gilsenan J.M."/>
            <person name="Joardar V."/>
            <person name="Deegan J."/>
            <person name="Clutterbuck J."/>
            <person name="Andersen M.R."/>
            <person name="Archer D."/>
            <person name="Bencina M."/>
            <person name="Braus G."/>
            <person name="Coutinho P."/>
            <person name="von Dohren H."/>
            <person name="Doonan J."/>
            <person name="Driessen A.J."/>
            <person name="Durek P."/>
            <person name="Espeso E."/>
            <person name="Fekete E."/>
            <person name="Flipphi M."/>
            <person name="Estrada C.G."/>
            <person name="Geysens S."/>
            <person name="Goldman G."/>
            <person name="de Groot P.W."/>
            <person name="Hansen K."/>
            <person name="Harris S.D."/>
            <person name="Heinekamp T."/>
            <person name="Helmstaedt K."/>
            <person name="Henrissat B."/>
            <person name="Hofmann G."/>
            <person name="Homan T."/>
            <person name="Horio T."/>
            <person name="Horiuchi H."/>
            <person name="James S."/>
            <person name="Jones M."/>
            <person name="Karaffa L."/>
            <person name="Karanyi Z."/>
            <person name="Kato M."/>
            <person name="Keller N."/>
            <person name="Kelly D.E."/>
            <person name="Kiel J.A."/>
            <person name="Kim J.M."/>
            <person name="van der Klei I.J."/>
            <person name="Klis F.M."/>
            <person name="Kovalchuk A."/>
            <person name="Krasevec N."/>
            <person name="Kubicek C.P."/>
            <person name="Liu B."/>
            <person name="Maccabe A."/>
            <person name="Meyer V."/>
            <person name="Mirabito P."/>
            <person name="Miskei M."/>
            <person name="Mos M."/>
            <person name="Mullins J."/>
            <person name="Nelson D.R."/>
            <person name="Nielsen J."/>
            <person name="Oakley B.R."/>
            <person name="Osmani S.A."/>
            <person name="Pakula T."/>
            <person name="Paszewski A."/>
            <person name="Paulsen I."/>
            <person name="Pilsyk S."/>
            <person name="Pocsi I."/>
            <person name="Punt P.J."/>
            <person name="Ram A.F."/>
            <person name="Ren Q."/>
            <person name="Robellet X."/>
            <person name="Robson G."/>
            <person name="Seiboth B."/>
            <person name="van Solingen P."/>
            <person name="Specht T."/>
            <person name="Sun J."/>
            <person name="Taheri-Talesh N."/>
            <person name="Takeshita N."/>
            <person name="Ussery D."/>
            <person name="vanKuyk P.A."/>
            <person name="Visser H."/>
            <person name="van de Vondervoort P.J."/>
            <person name="de Vries R.P."/>
            <person name="Walton J."/>
            <person name="Xiang X."/>
            <person name="Xiong Y."/>
            <person name="Zeng A.P."/>
            <person name="Brandt B.W."/>
            <person name="Cornell M.J."/>
            <person name="van den Hondel C.A."/>
            <person name="Visser J."/>
            <person name="Oliver S.G."/>
            <person name="Turner G."/>
        </authorList>
    </citation>
    <scope>GENOME REANNOTATION</scope>
    <source>
        <strain>FGSC A4 / ATCC 38163 / CBS 112.46 / NRRL 194 / M139</strain>
    </source>
</reference>
<evidence type="ECO:0000250" key="1"/>
<evidence type="ECO:0000256" key="2">
    <source>
        <dbReference type="SAM" id="MobiDB-lite"/>
    </source>
</evidence>
<evidence type="ECO:0000305" key="3"/>
<organism>
    <name type="scientific">Emericella nidulans (strain FGSC A4 / ATCC 38163 / CBS 112.46 / NRRL 194 / M139)</name>
    <name type="common">Aspergillus nidulans</name>
    <dbReference type="NCBI Taxonomy" id="227321"/>
    <lineage>
        <taxon>Eukaryota</taxon>
        <taxon>Fungi</taxon>
        <taxon>Dikarya</taxon>
        <taxon>Ascomycota</taxon>
        <taxon>Pezizomycotina</taxon>
        <taxon>Eurotiomycetes</taxon>
        <taxon>Eurotiomycetidae</taxon>
        <taxon>Eurotiales</taxon>
        <taxon>Aspergillaceae</taxon>
        <taxon>Aspergillus</taxon>
        <taxon>Aspergillus subgen. Nidulantes</taxon>
    </lineage>
</organism>
<feature type="chain" id="PRO_0000415144" description="6-phosphogluconate dehydrogenase, decarboxylating">
    <location>
        <begin position="1"/>
        <end position="496"/>
    </location>
</feature>
<feature type="region of interest" description="Disordered" evidence="2">
    <location>
        <begin position="476"/>
        <end position="496"/>
    </location>
</feature>
<feature type="active site" description="Proton acceptor" evidence="1">
    <location>
        <position position="178"/>
    </location>
</feature>
<feature type="active site" description="Proton donor" evidence="1">
    <location>
        <position position="185"/>
    </location>
</feature>
<feature type="binding site" evidence="1">
    <location>
        <begin position="13"/>
        <end position="18"/>
    </location>
    <ligand>
        <name>NADP(+)</name>
        <dbReference type="ChEBI" id="CHEBI:58349"/>
    </ligand>
</feature>
<feature type="binding site" evidence="1">
    <location>
        <begin position="24"/>
        <end position="26"/>
    </location>
    <ligand>
        <name>NADP(+)</name>
        <dbReference type="ChEBI" id="CHEBI:58349"/>
    </ligand>
</feature>
<feature type="binding site" evidence="1">
    <location>
        <begin position="68"/>
        <end position="70"/>
    </location>
    <ligand>
        <name>NADP(+)</name>
        <dbReference type="ChEBI" id="CHEBI:58349"/>
    </ligand>
</feature>
<feature type="binding site" evidence="1">
    <location>
        <position position="96"/>
    </location>
    <ligand>
        <name>NADP(+)</name>
        <dbReference type="ChEBI" id="CHEBI:58349"/>
    </ligand>
</feature>
<feature type="binding site" description="in other chain" evidence="1">
    <location>
        <position position="96"/>
    </location>
    <ligand>
        <name>substrate</name>
        <note>ligand shared between dimeric partners</note>
    </ligand>
</feature>
<feature type="binding site" description="in other chain" evidence="1">
    <location>
        <begin position="122"/>
        <end position="124"/>
    </location>
    <ligand>
        <name>substrate</name>
        <note>ligand shared between dimeric partners</note>
    </ligand>
</feature>
<feature type="binding site" description="in other chain" evidence="1">
    <location>
        <begin position="181"/>
        <end position="182"/>
    </location>
    <ligand>
        <name>substrate</name>
        <note>ligand shared between dimeric partners</note>
    </ligand>
</feature>
<feature type="binding site" description="in other chain" evidence="1">
    <location>
        <position position="300"/>
    </location>
    <ligand>
        <name>substrate</name>
        <note>ligand shared between dimeric partners</note>
    </ligand>
</feature>
<feature type="binding site" evidence="1">
    <location>
        <position position="468"/>
    </location>
    <ligand>
        <name>substrate</name>
        <note>ligand shared between dimeric partners</note>
    </ligand>
</feature>
<name>6PGD_EMENI</name>
<protein>
    <recommendedName>
        <fullName>6-phosphogluconate dehydrogenase, decarboxylating</fullName>
        <ecNumber>1.1.1.44</ecNumber>
    </recommendedName>
</protein>
<proteinExistence type="inferred from homology"/>
<gene>
    <name type="ORF">AN10233</name>
</gene>
<dbReference type="EC" id="1.1.1.44"/>
<dbReference type="EMBL" id="AACD01000027">
    <property type="protein sequence ID" value="EAA64021.1"/>
    <property type="status" value="ALT_SEQ"/>
    <property type="molecule type" value="Genomic_DNA"/>
</dbReference>
<dbReference type="EMBL" id="BN001307">
    <property type="protein sequence ID" value="CBF85462.1"/>
    <property type="molecule type" value="Genomic_DNA"/>
</dbReference>
<dbReference type="SMR" id="C8VP36"/>
<dbReference type="STRING" id="227321.C8VP36"/>
<dbReference type="EnsemblFungi" id="CBF85462">
    <property type="protein sequence ID" value="CBF85462"/>
    <property type="gene ID" value="ANIA_10233"/>
</dbReference>
<dbReference type="eggNOG" id="KOG2653">
    <property type="taxonomic scope" value="Eukaryota"/>
</dbReference>
<dbReference type="HOGENOM" id="CLU_016264_0_0_1"/>
<dbReference type="InParanoid" id="C8VP36"/>
<dbReference type="OMA" id="GSHMFDK"/>
<dbReference type="OrthoDB" id="434986at2759"/>
<dbReference type="UniPathway" id="UPA00115">
    <property type="reaction ID" value="UER00410"/>
</dbReference>
<dbReference type="Proteomes" id="UP000000560">
    <property type="component" value="Chromosome VII"/>
</dbReference>
<dbReference type="GO" id="GO:0005829">
    <property type="term" value="C:cytosol"/>
    <property type="evidence" value="ECO:0000318"/>
    <property type="project" value="GO_Central"/>
</dbReference>
<dbReference type="GO" id="GO:0050661">
    <property type="term" value="F:NADP binding"/>
    <property type="evidence" value="ECO:0000318"/>
    <property type="project" value="GO_Central"/>
</dbReference>
<dbReference type="GO" id="GO:0004616">
    <property type="term" value="F:phosphogluconate dehydrogenase (decarboxylating) activity"/>
    <property type="evidence" value="ECO:0000318"/>
    <property type="project" value="GO_Central"/>
</dbReference>
<dbReference type="GO" id="GO:0019521">
    <property type="term" value="P:D-gluconate metabolic process"/>
    <property type="evidence" value="ECO:0007669"/>
    <property type="project" value="UniProtKB-KW"/>
</dbReference>
<dbReference type="GO" id="GO:0009051">
    <property type="term" value="P:pentose-phosphate shunt, oxidative branch"/>
    <property type="evidence" value="ECO:0000318"/>
    <property type="project" value="GO_Central"/>
</dbReference>
<dbReference type="FunFam" id="1.10.1040.10:FF:000040">
    <property type="entry name" value="6-phosphogluconate dehydrogenase, decarboxylating"/>
    <property type="match status" value="1"/>
</dbReference>
<dbReference type="FunFam" id="3.40.50.720:FF:000634">
    <property type="entry name" value="6-phosphogluconate dehydrogenase, decarboxylating"/>
    <property type="match status" value="1"/>
</dbReference>
<dbReference type="Gene3D" id="1.20.5.320">
    <property type="entry name" value="6-Phosphogluconate Dehydrogenase, domain 3"/>
    <property type="match status" value="1"/>
</dbReference>
<dbReference type="Gene3D" id="1.10.1040.10">
    <property type="entry name" value="N-(1-d-carboxylethyl)-l-norvaline Dehydrogenase, domain 2"/>
    <property type="match status" value="1"/>
</dbReference>
<dbReference type="Gene3D" id="3.40.50.720">
    <property type="entry name" value="NAD(P)-binding Rossmann-like Domain"/>
    <property type="match status" value="1"/>
</dbReference>
<dbReference type="InterPro" id="IPR008927">
    <property type="entry name" value="6-PGluconate_DH-like_C_sf"/>
</dbReference>
<dbReference type="InterPro" id="IPR013328">
    <property type="entry name" value="6PGD_dom2"/>
</dbReference>
<dbReference type="InterPro" id="IPR006114">
    <property type="entry name" value="6PGDH_C"/>
</dbReference>
<dbReference type="InterPro" id="IPR006115">
    <property type="entry name" value="6PGDH_NADP-bd"/>
</dbReference>
<dbReference type="InterPro" id="IPR036291">
    <property type="entry name" value="NAD(P)-bd_dom_sf"/>
</dbReference>
<dbReference type="InterPro" id="IPR006183">
    <property type="entry name" value="Pgluconate_DH"/>
</dbReference>
<dbReference type="PANTHER" id="PTHR11811">
    <property type="entry name" value="6-PHOSPHOGLUCONATE DEHYDROGENASE"/>
    <property type="match status" value="1"/>
</dbReference>
<dbReference type="Pfam" id="PF00393">
    <property type="entry name" value="6PGD"/>
    <property type="match status" value="1"/>
</dbReference>
<dbReference type="Pfam" id="PF03446">
    <property type="entry name" value="NAD_binding_2"/>
    <property type="match status" value="1"/>
</dbReference>
<dbReference type="PRINTS" id="PR00076">
    <property type="entry name" value="6PGDHDRGNASE"/>
</dbReference>
<dbReference type="SMART" id="SM01350">
    <property type="entry name" value="6PGD"/>
    <property type="match status" value="1"/>
</dbReference>
<dbReference type="SUPFAM" id="SSF48179">
    <property type="entry name" value="6-phosphogluconate dehydrogenase C-terminal domain-like"/>
    <property type="match status" value="1"/>
</dbReference>
<dbReference type="SUPFAM" id="SSF51735">
    <property type="entry name" value="NAD(P)-binding Rossmann-fold domains"/>
    <property type="match status" value="1"/>
</dbReference>
<comment type="function">
    <text evidence="1">Catalyzes the oxidative decarboxylation of 6-phosphogluconate to ribulose 5-phosphate and CO(2), with concomitant reduction of NADP to NADPH.</text>
</comment>
<comment type="catalytic activity">
    <reaction>
        <text>6-phospho-D-gluconate + NADP(+) = D-ribulose 5-phosphate + CO2 + NADPH</text>
        <dbReference type="Rhea" id="RHEA:10116"/>
        <dbReference type="ChEBI" id="CHEBI:16526"/>
        <dbReference type="ChEBI" id="CHEBI:57783"/>
        <dbReference type="ChEBI" id="CHEBI:58121"/>
        <dbReference type="ChEBI" id="CHEBI:58349"/>
        <dbReference type="ChEBI" id="CHEBI:58759"/>
        <dbReference type="EC" id="1.1.1.44"/>
    </reaction>
</comment>
<comment type="pathway">
    <text>Carbohydrate degradation; pentose phosphate pathway; D-ribulose 5-phosphate from D-glucose 6-phosphate (oxidative stage): step 3/3.</text>
</comment>
<comment type="subunit">
    <text evidence="1">Homodimer.</text>
</comment>
<comment type="subcellular location">
    <subcellularLocation>
        <location evidence="1">Cytoplasm</location>
    </subcellularLocation>
</comment>
<comment type="similarity">
    <text evidence="3">Belongs to the 6-phosphogluconate dehydrogenase family.</text>
</comment>
<comment type="sequence caution" evidence="3">
    <conflict type="erroneous gene model prediction">
        <sequence resource="EMBL-CDS" id="EAA64021"/>
    </conflict>
    <text>The predicted gene AN1735 has been split into 2 genes: AN10230 and AN10233.</text>
</comment>
<accession>C8VP36</accession>
<accession>Q5BCJ5</accession>